<evidence type="ECO:0000250" key="1"/>
<evidence type="ECO:0000255" key="2">
    <source>
        <dbReference type="PROSITE-ProRule" id="PRU10132"/>
    </source>
</evidence>
<evidence type="ECO:0000269" key="3">
    <source>
    </source>
</evidence>
<evidence type="ECO:0000269" key="4">
    <source>
    </source>
</evidence>
<evidence type="ECO:0000305" key="5"/>
<protein>
    <recommendedName>
        <fullName>NEDD8-activating enzyme E1 catalytic subunit</fullName>
        <ecNumber>6.2.1.64</ecNumber>
    </recommendedName>
    <alternativeName>
        <fullName>RUB1-activating enzyme E1</fullName>
    </alternativeName>
    <alternativeName>
        <fullName>Ubiquitin-activating enzyme E1 3</fullName>
    </alternativeName>
    <alternativeName>
        <fullName>Ubiquitin-like protein-activating enzyme</fullName>
    </alternativeName>
</protein>
<reference key="1">
    <citation type="journal article" date="1998" name="EMBO J.">
        <title>A novel protein modification pathway related to the ubiquitin system.</title>
        <authorList>
            <person name="Liakopoulos D."/>
            <person name="Doenges G."/>
            <person name="Matuschewski K."/>
            <person name="Jentsch S."/>
        </authorList>
    </citation>
    <scope>NUCLEOTIDE SEQUENCE [GENOMIC DNA]</scope>
    <scope>FUNCTION</scope>
    <source>
        <strain>ATCC 200912 / DF5</strain>
    </source>
</reference>
<reference key="2">
    <citation type="journal article" date="1997" name="Nature">
        <title>The nucleotide sequence of Saccharomyces cerevisiae chromosome XVI.</title>
        <authorList>
            <person name="Bussey H."/>
            <person name="Storms R.K."/>
            <person name="Ahmed A."/>
            <person name="Albermann K."/>
            <person name="Allen E."/>
            <person name="Ansorge W."/>
            <person name="Araujo R."/>
            <person name="Aparicio A."/>
            <person name="Barrell B.G."/>
            <person name="Badcock K."/>
            <person name="Benes V."/>
            <person name="Botstein D."/>
            <person name="Bowman S."/>
            <person name="Brueckner M."/>
            <person name="Carpenter J."/>
            <person name="Cherry J.M."/>
            <person name="Chung E."/>
            <person name="Churcher C.M."/>
            <person name="Coster F."/>
            <person name="Davis K."/>
            <person name="Davis R.W."/>
            <person name="Dietrich F.S."/>
            <person name="Delius H."/>
            <person name="DiPaolo T."/>
            <person name="Dubois E."/>
            <person name="Duesterhoeft A."/>
            <person name="Duncan M."/>
            <person name="Floeth M."/>
            <person name="Fortin N."/>
            <person name="Friesen J.D."/>
            <person name="Fritz C."/>
            <person name="Goffeau A."/>
            <person name="Hall J."/>
            <person name="Hebling U."/>
            <person name="Heumann K."/>
            <person name="Hilbert H."/>
            <person name="Hillier L.W."/>
            <person name="Hunicke-Smith S."/>
            <person name="Hyman R.W."/>
            <person name="Johnston M."/>
            <person name="Kalman S."/>
            <person name="Kleine K."/>
            <person name="Komp C."/>
            <person name="Kurdi O."/>
            <person name="Lashkari D."/>
            <person name="Lew H."/>
            <person name="Lin A."/>
            <person name="Lin D."/>
            <person name="Louis E.J."/>
            <person name="Marathe R."/>
            <person name="Messenguy F."/>
            <person name="Mewes H.-W."/>
            <person name="Mirtipati S."/>
            <person name="Moestl D."/>
            <person name="Mueller-Auer S."/>
            <person name="Namath A."/>
            <person name="Nentwich U."/>
            <person name="Oefner P."/>
            <person name="Pearson D."/>
            <person name="Petel F.X."/>
            <person name="Pohl T.M."/>
            <person name="Purnelle B."/>
            <person name="Rajandream M.A."/>
            <person name="Rechmann S."/>
            <person name="Rieger M."/>
            <person name="Riles L."/>
            <person name="Roberts D."/>
            <person name="Schaefer M."/>
            <person name="Scharfe M."/>
            <person name="Scherens B."/>
            <person name="Schramm S."/>
            <person name="Schroeder M."/>
            <person name="Sdicu A.-M."/>
            <person name="Tettelin H."/>
            <person name="Urrestarazu L.A."/>
            <person name="Ushinsky S."/>
            <person name="Vierendeels F."/>
            <person name="Vissers S."/>
            <person name="Voss H."/>
            <person name="Walsh S.V."/>
            <person name="Wambutt R."/>
            <person name="Wang Y."/>
            <person name="Wedler E."/>
            <person name="Wedler H."/>
            <person name="Winnett E."/>
            <person name="Zhong W.-W."/>
            <person name="Zollner A."/>
            <person name="Vo D.H."/>
            <person name="Hani J."/>
        </authorList>
    </citation>
    <scope>NUCLEOTIDE SEQUENCE [LARGE SCALE GENOMIC DNA]</scope>
    <source>
        <strain>ATCC 204508 / S288c</strain>
    </source>
</reference>
<reference key="3">
    <citation type="journal article" date="2014" name="G3 (Bethesda)">
        <title>The reference genome sequence of Saccharomyces cerevisiae: Then and now.</title>
        <authorList>
            <person name="Engel S.R."/>
            <person name="Dietrich F.S."/>
            <person name="Fisk D.G."/>
            <person name="Binkley G."/>
            <person name="Balakrishnan R."/>
            <person name="Costanzo M.C."/>
            <person name="Dwight S.S."/>
            <person name="Hitz B.C."/>
            <person name="Karra K."/>
            <person name="Nash R.S."/>
            <person name="Weng S."/>
            <person name="Wong E.D."/>
            <person name="Lloyd P."/>
            <person name="Skrzypek M.S."/>
            <person name="Miyasato S.R."/>
            <person name="Simison M."/>
            <person name="Cherry J.M."/>
        </authorList>
    </citation>
    <scope>GENOME REANNOTATION</scope>
    <source>
        <strain>ATCC 204508 / S288c</strain>
    </source>
</reference>
<reference key="4">
    <citation type="journal article" date="2007" name="Genome Res.">
        <title>Approaching a complete repository of sequence-verified protein-encoding clones for Saccharomyces cerevisiae.</title>
        <authorList>
            <person name="Hu Y."/>
            <person name="Rolfs A."/>
            <person name="Bhullar B."/>
            <person name="Murthy T.V.S."/>
            <person name="Zhu C."/>
            <person name="Berger M.F."/>
            <person name="Camargo A.A."/>
            <person name="Kelley F."/>
            <person name="McCarron S."/>
            <person name="Jepson D."/>
            <person name="Richardson A."/>
            <person name="Raphael J."/>
            <person name="Moreira D."/>
            <person name="Taycher E."/>
            <person name="Zuo D."/>
            <person name="Mohr S."/>
            <person name="Kane M.F."/>
            <person name="Williamson J."/>
            <person name="Simpson A.J.G."/>
            <person name="Bulyk M.L."/>
            <person name="Harlow E."/>
            <person name="Marsischky G."/>
            <person name="Kolodner R.D."/>
            <person name="LaBaer J."/>
        </authorList>
    </citation>
    <scope>NUCLEOTIDE SEQUENCE [GENOMIC DNA]</scope>
    <source>
        <strain>ATCC 204508 / S288c</strain>
    </source>
</reference>
<reference key="5">
    <citation type="journal article" date="2003" name="Nature">
        <title>Global analysis of protein expression in yeast.</title>
        <authorList>
            <person name="Ghaemmaghami S."/>
            <person name="Huh W.-K."/>
            <person name="Bower K."/>
            <person name="Howson R.W."/>
            <person name="Belle A."/>
            <person name="Dephoure N."/>
            <person name="O'Shea E.K."/>
            <person name="Weissman J.S."/>
        </authorList>
    </citation>
    <scope>LEVEL OF PROTEIN EXPRESSION [LARGE SCALE ANALYSIS]</scope>
</reference>
<name>UBA3_YEAST</name>
<gene>
    <name type="primary">UBA3</name>
    <name type="ordered locus">YPR066W</name>
    <name type="ORF">YP9499.21</name>
</gene>
<accession>Q99344</accession>
<accession>D6W470</accession>
<accession>E9P8X1</accession>
<organism>
    <name type="scientific">Saccharomyces cerevisiae (strain ATCC 204508 / S288c)</name>
    <name type="common">Baker's yeast</name>
    <dbReference type="NCBI Taxonomy" id="559292"/>
    <lineage>
        <taxon>Eukaryota</taxon>
        <taxon>Fungi</taxon>
        <taxon>Dikarya</taxon>
        <taxon>Ascomycota</taxon>
        <taxon>Saccharomycotina</taxon>
        <taxon>Saccharomycetes</taxon>
        <taxon>Saccharomycetales</taxon>
        <taxon>Saccharomycetaceae</taxon>
        <taxon>Saccharomyces</taxon>
    </lineage>
</organism>
<feature type="chain" id="PRO_0000194950" description="NEDD8-activating enzyme E1 catalytic subunit">
    <location>
        <begin position="1"/>
        <end position="299"/>
    </location>
</feature>
<feature type="active site" description="Glycyl thioester intermediate" evidence="2">
    <location>
        <position position="168"/>
    </location>
</feature>
<feature type="binding site" evidence="1">
    <location>
        <begin position="12"/>
        <end position="37"/>
    </location>
    <ligand>
        <name>ATP</name>
        <dbReference type="ChEBI" id="CHEBI:30616"/>
    </ligand>
</feature>
<feature type="sequence conflict" description="In Ref. 4; AAT92800." evidence="5" ref="4">
    <original>V</original>
    <variation>L</variation>
    <location>
        <position position="33"/>
    </location>
</feature>
<proteinExistence type="evidence at protein level"/>
<keyword id="KW-0067">ATP-binding</keyword>
<keyword id="KW-0436">Ligase</keyword>
<keyword id="KW-0547">Nucleotide-binding</keyword>
<keyword id="KW-1185">Reference proteome</keyword>
<keyword id="KW-0833">Ubl conjugation pathway</keyword>
<dbReference type="EC" id="6.2.1.64"/>
<dbReference type="EMBL" id="Y16891">
    <property type="protein sequence ID" value="CAA76517.1"/>
    <property type="molecule type" value="Genomic_DNA"/>
</dbReference>
<dbReference type="EMBL" id="Z71255">
    <property type="protein sequence ID" value="CAA94974.1"/>
    <property type="molecule type" value="Genomic_DNA"/>
</dbReference>
<dbReference type="EMBL" id="Z49219">
    <property type="protein sequence ID" value="CAA89183.1"/>
    <property type="molecule type" value="Genomic_DNA"/>
</dbReference>
<dbReference type="EMBL" id="AY692781">
    <property type="protein sequence ID" value="AAT92800.1"/>
    <property type="molecule type" value="Genomic_DNA"/>
</dbReference>
<dbReference type="EMBL" id="BK006949">
    <property type="protein sequence ID" value="DAA11486.1"/>
    <property type="molecule type" value="Genomic_DNA"/>
</dbReference>
<dbReference type="PIR" id="S54087">
    <property type="entry name" value="S54087"/>
</dbReference>
<dbReference type="RefSeq" id="NP_015391.1">
    <property type="nucleotide sequence ID" value="NM_001184163.1"/>
</dbReference>
<dbReference type="SMR" id="Q99344"/>
<dbReference type="BioGRID" id="36238">
    <property type="interactions" value="344"/>
</dbReference>
<dbReference type="ComplexPortal" id="CPX-1414">
    <property type="entry name" value="UBA3-ULA1 E1 enzyme"/>
</dbReference>
<dbReference type="DIP" id="DIP-1719N"/>
<dbReference type="FunCoup" id="Q99344">
    <property type="interactions" value="1407"/>
</dbReference>
<dbReference type="IntAct" id="Q99344">
    <property type="interactions" value="3"/>
</dbReference>
<dbReference type="MINT" id="Q99344"/>
<dbReference type="STRING" id="4932.YPR066W"/>
<dbReference type="iPTMnet" id="Q99344"/>
<dbReference type="PaxDb" id="4932-YPR066W"/>
<dbReference type="PeptideAtlas" id="Q99344"/>
<dbReference type="EnsemblFungi" id="YPR066W_mRNA">
    <property type="protein sequence ID" value="YPR066W"/>
    <property type="gene ID" value="YPR066W"/>
</dbReference>
<dbReference type="GeneID" id="856179"/>
<dbReference type="KEGG" id="sce:YPR066W"/>
<dbReference type="AGR" id="SGD:S000006270"/>
<dbReference type="SGD" id="S000006270">
    <property type="gene designation" value="UBA3"/>
</dbReference>
<dbReference type="VEuPathDB" id="FungiDB:YPR066W"/>
<dbReference type="eggNOG" id="KOG2015">
    <property type="taxonomic scope" value="Eukaryota"/>
</dbReference>
<dbReference type="GeneTree" id="ENSGT00550000074831"/>
<dbReference type="HOGENOM" id="CLU_013325_13_0_1"/>
<dbReference type="InParanoid" id="Q99344"/>
<dbReference type="OMA" id="HIIEYVI"/>
<dbReference type="OrthoDB" id="10255449at2759"/>
<dbReference type="BioCyc" id="YEAST:G3O-34214-MONOMER"/>
<dbReference type="BRENDA" id="6.2.1.64">
    <property type="organism ID" value="984"/>
</dbReference>
<dbReference type="Reactome" id="R-SCE-8951664">
    <property type="pathway name" value="Neddylation"/>
</dbReference>
<dbReference type="Reactome" id="R-SCE-983168">
    <property type="pathway name" value="Antigen processing: Ubiquitination &amp; Proteasome degradation"/>
</dbReference>
<dbReference type="UniPathway" id="UPA00885"/>
<dbReference type="BioGRID-ORCS" id="856179">
    <property type="hits" value="0 hits in 10 CRISPR screens"/>
</dbReference>
<dbReference type="PRO" id="PR:Q99344"/>
<dbReference type="Proteomes" id="UP000002311">
    <property type="component" value="Chromosome XVI"/>
</dbReference>
<dbReference type="RNAct" id="Q99344">
    <property type="molecule type" value="protein"/>
</dbReference>
<dbReference type="GO" id="GO:0005737">
    <property type="term" value="C:cytoplasm"/>
    <property type="evidence" value="ECO:0007005"/>
    <property type="project" value="SGD"/>
</dbReference>
<dbReference type="GO" id="GO:0005634">
    <property type="term" value="C:nucleus"/>
    <property type="evidence" value="ECO:0000318"/>
    <property type="project" value="GO_Central"/>
</dbReference>
<dbReference type="GO" id="GO:0120123">
    <property type="term" value="C:ubiquitin activating enzyme complex"/>
    <property type="evidence" value="ECO:0000353"/>
    <property type="project" value="ComplexPortal"/>
</dbReference>
<dbReference type="GO" id="GO:0005524">
    <property type="term" value="F:ATP binding"/>
    <property type="evidence" value="ECO:0007669"/>
    <property type="project" value="UniProtKB-KW"/>
</dbReference>
<dbReference type="GO" id="GO:0019781">
    <property type="term" value="F:NEDD8 activating enzyme activity"/>
    <property type="evidence" value="ECO:0000314"/>
    <property type="project" value="SGD"/>
</dbReference>
<dbReference type="GO" id="GO:0045116">
    <property type="term" value="P:protein neddylation"/>
    <property type="evidence" value="ECO:0000314"/>
    <property type="project" value="ComplexPortal"/>
</dbReference>
<dbReference type="CDD" id="cd01488">
    <property type="entry name" value="Uba3_RUB"/>
    <property type="match status" value="1"/>
</dbReference>
<dbReference type="FunFam" id="1.10.10.520:FF:000007">
    <property type="entry name" value="UBA3p"/>
    <property type="match status" value="1"/>
</dbReference>
<dbReference type="Gene3D" id="3.40.50.720">
    <property type="entry name" value="NAD(P)-binding Rossmann-like Domain"/>
    <property type="match status" value="1"/>
</dbReference>
<dbReference type="Gene3D" id="1.10.10.520">
    <property type="entry name" value="Ubiquitin activating enzymes (Uba3). Chain: B, domain 2"/>
    <property type="match status" value="1"/>
</dbReference>
<dbReference type="InterPro" id="IPR045886">
    <property type="entry name" value="ThiF/MoeB/HesA"/>
</dbReference>
<dbReference type="InterPro" id="IPR000594">
    <property type="entry name" value="ThiF_NAD_FAD-bd"/>
</dbReference>
<dbReference type="InterPro" id="IPR023318">
    <property type="entry name" value="Ub_act_enz_dom_a_sf"/>
</dbReference>
<dbReference type="InterPro" id="IPR030468">
    <property type="entry name" value="Uba3_N"/>
</dbReference>
<dbReference type="InterPro" id="IPR035985">
    <property type="entry name" value="Ubiquitin-activating_enz"/>
</dbReference>
<dbReference type="InterPro" id="IPR033127">
    <property type="entry name" value="UBQ-activ_enz_E1_Cys_AS"/>
</dbReference>
<dbReference type="PANTHER" id="PTHR10953:SF6">
    <property type="entry name" value="NEDD8-ACTIVATING ENZYME E1 CATALYTIC SUBUNIT"/>
    <property type="match status" value="1"/>
</dbReference>
<dbReference type="PANTHER" id="PTHR10953">
    <property type="entry name" value="UBIQUITIN-ACTIVATING ENZYME E1"/>
    <property type="match status" value="1"/>
</dbReference>
<dbReference type="Pfam" id="PF00899">
    <property type="entry name" value="ThiF"/>
    <property type="match status" value="1"/>
</dbReference>
<dbReference type="SUPFAM" id="SSF69572">
    <property type="entry name" value="Activating enzymes of the ubiquitin-like proteins"/>
    <property type="match status" value="1"/>
</dbReference>
<dbReference type="PROSITE" id="PS00865">
    <property type="entry name" value="UBIQUITIN_ACTIVAT_2"/>
    <property type="match status" value="1"/>
</dbReference>
<sequence length="299" mass="33278">MDCKILVLGAGGLGCEILKNLTMLSFVKQVHIVDIDTIELTNLNRQFLFCDKDIGKPKAQVAAQYVNTRFPQLEVVAHVQDLTTLPPSFYKDFQFIISGLDAIEPRRFINETLVKLTLESNYEICIPFIDGGTEGLKGHVKTIIPGITACWECSIDTLPSQQDTVPMCTIANNPRCIEHVVEYVSTIQYPDLNIESTADMEFLLEKCCERAAQFSISTEKLSTSFILGIIKSIIPSVSTTNAMVAATCCTQMVKIYNDLIDLENGNNFTLINCSEGCFMYSFKFERLPDCTVCSNSNSN</sequence>
<comment type="function">
    <text evidence="4">Catalytic subunit of the dimeric UBA3-ULA1 E1 enzyme. E1 activates NEDD8/RUB1 by first adenylating its C-terminal glycine residue with ATP, thereafter linking this residue to the side chain of the catalytic cysteine, yielding a NEDD8-UBA3 thioester and free AMP. E1 finally transfers NEDD8 to the catalytic cysteine of UBC12.</text>
</comment>
<comment type="catalytic activity">
    <reaction>
        <text>ATP + [NEDD8 protein] + [E1 NEDD8-activating enzyme]-L-cysteine = AMP + diphosphate + [E1 NEDD8-activating enzyme]-S-[NEDD8 protein]-yl-L-cysteine.</text>
        <dbReference type="EC" id="6.2.1.64"/>
    </reaction>
</comment>
<comment type="pathway">
    <text>Protein modification; protein neddylation.</text>
</comment>
<comment type="subunit">
    <text evidence="1">Heterodimer of UBA3 and ULA1. Interacts with NEDD8 and UBC12 (By similarity).</text>
</comment>
<comment type="interaction">
    <interactant intactId="EBI-37997">
        <id>Q99344</id>
    </interactant>
    <interactant intactId="EBI-32882">
        <id>Q12059</id>
        <label>ULA1</label>
    </interactant>
    <organismsDiffer>false</organismsDiffer>
    <experiments>4</experiments>
</comment>
<comment type="miscellaneous">
    <text evidence="3">Present with 752 molecules/cell in log phase SD medium.</text>
</comment>
<comment type="similarity">
    <text evidence="5">Belongs to the ubiquitin-activating E1 family. UBA3 subfamily.</text>
</comment>